<dbReference type="EMBL" id="AF112151">
    <property type="protein sequence ID" value="AAD41767.1"/>
    <property type="molecule type" value="mRNA"/>
</dbReference>
<dbReference type="EMBL" id="AK085170">
    <property type="protein sequence ID" value="BAC39381.1"/>
    <property type="molecule type" value="mRNA"/>
</dbReference>
<dbReference type="EMBL" id="AK090129">
    <property type="protein sequence ID" value="BAC41109.1"/>
    <property type="molecule type" value="mRNA"/>
</dbReference>
<dbReference type="EMBL" id="AK159471">
    <property type="protein sequence ID" value="BAE35112.1"/>
    <property type="molecule type" value="mRNA"/>
</dbReference>
<dbReference type="EMBL" id="AK159960">
    <property type="protein sequence ID" value="BAE35515.1"/>
    <property type="molecule type" value="mRNA"/>
</dbReference>
<dbReference type="EMBL" id="AK165018">
    <property type="protein sequence ID" value="BAE38002.1"/>
    <property type="molecule type" value="mRNA"/>
</dbReference>
<dbReference type="EMBL" id="BC006636">
    <property type="protein sequence ID" value="AAH06636.1"/>
    <property type="molecule type" value="mRNA"/>
</dbReference>
<dbReference type="CCDS" id="CCDS36525.1"/>
<dbReference type="RefSeq" id="NP_035942.1">
    <property type="nucleotide sequence ID" value="NM_011812.5"/>
</dbReference>
<dbReference type="BioGRID" id="204769">
    <property type="interactions" value="1"/>
</dbReference>
<dbReference type="FunCoup" id="Q9WVH9">
    <property type="interactions" value="246"/>
</dbReference>
<dbReference type="IntAct" id="Q9WVH9">
    <property type="interactions" value="2"/>
</dbReference>
<dbReference type="MINT" id="Q9WVH9"/>
<dbReference type="STRING" id="10090.ENSMUSP00000021603"/>
<dbReference type="GlyConnect" id="2315">
    <property type="glycosylation" value="2 N-Linked glycans (1 site)"/>
</dbReference>
<dbReference type="GlyCosmos" id="Q9WVH9">
    <property type="glycosylation" value="2 sites, 2 glycans"/>
</dbReference>
<dbReference type="GlyGen" id="Q9WVH9">
    <property type="glycosylation" value="2 sites, 3 N-linked glycans (1 site)"/>
</dbReference>
<dbReference type="iPTMnet" id="Q9WVH9"/>
<dbReference type="PhosphoSitePlus" id="Q9WVH9"/>
<dbReference type="PaxDb" id="10090-ENSMUSP00000021603"/>
<dbReference type="PeptideAtlas" id="Q9WVH9"/>
<dbReference type="ProteomicsDB" id="272957"/>
<dbReference type="Pumba" id="Q9WVH9"/>
<dbReference type="Antibodypedia" id="72">
    <property type="antibodies" value="445 antibodies from 37 providers"/>
</dbReference>
<dbReference type="DNASU" id="23876"/>
<dbReference type="Ensembl" id="ENSMUST00000021603.9">
    <property type="protein sequence ID" value="ENSMUSP00000021603.9"/>
    <property type="gene ID" value="ENSMUSG00000021186.10"/>
</dbReference>
<dbReference type="GeneID" id="23876"/>
<dbReference type="KEGG" id="mmu:23876"/>
<dbReference type="UCSC" id="uc007otp.2">
    <property type="organism name" value="mouse"/>
</dbReference>
<dbReference type="AGR" id="MGI:1346091"/>
<dbReference type="CTD" id="10516"/>
<dbReference type="MGI" id="MGI:1346091">
    <property type="gene designation" value="Fbln5"/>
</dbReference>
<dbReference type="VEuPathDB" id="HostDB:ENSMUSG00000021186"/>
<dbReference type="eggNOG" id="KOG1217">
    <property type="taxonomic scope" value="Eukaryota"/>
</dbReference>
<dbReference type="GeneTree" id="ENSGT00940000158774"/>
<dbReference type="HOGENOM" id="CLU_004826_0_1_1"/>
<dbReference type="InParanoid" id="Q9WVH9"/>
<dbReference type="OMA" id="LICRFGF"/>
<dbReference type="PhylomeDB" id="Q9WVH9"/>
<dbReference type="TreeFam" id="TF317514"/>
<dbReference type="Reactome" id="R-MMU-1566948">
    <property type="pathway name" value="Elastic fibre formation"/>
</dbReference>
<dbReference type="Reactome" id="R-MMU-2129379">
    <property type="pathway name" value="Molecules associated with elastic fibres"/>
</dbReference>
<dbReference type="BioGRID-ORCS" id="23876">
    <property type="hits" value="3 hits in 78 CRISPR screens"/>
</dbReference>
<dbReference type="ChiTaRS" id="Fbln5">
    <property type="organism name" value="mouse"/>
</dbReference>
<dbReference type="PRO" id="PR:Q9WVH9"/>
<dbReference type="Proteomes" id="UP000000589">
    <property type="component" value="Chromosome 12"/>
</dbReference>
<dbReference type="RNAct" id="Q9WVH9">
    <property type="molecule type" value="protein"/>
</dbReference>
<dbReference type="Bgee" id="ENSMUSG00000021186">
    <property type="expression patterns" value="Expressed in external carotid artery and 238 other cell types or tissues"/>
</dbReference>
<dbReference type="ExpressionAtlas" id="Q9WVH9">
    <property type="expression patterns" value="baseline and differential"/>
</dbReference>
<dbReference type="GO" id="GO:0062023">
    <property type="term" value="C:collagen-containing extracellular matrix"/>
    <property type="evidence" value="ECO:0007005"/>
    <property type="project" value="BHF-UCL"/>
</dbReference>
<dbReference type="GO" id="GO:0005576">
    <property type="term" value="C:extracellular region"/>
    <property type="evidence" value="ECO:0000304"/>
    <property type="project" value="Reactome"/>
</dbReference>
<dbReference type="GO" id="GO:0005615">
    <property type="term" value="C:extracellular space"/>
    <property type="evidence" value="ECO:0000314"/>
    <property type="project" value="UniProtKB"/>
</dbReference>
<dbReference type="GO" id="GO:0005509">
    <property type="term" value="F:calcium ion binding"/>
    <property type="evidence" value="ECO:0007669"/>
    <property type="project" value="InterPro"/>
</dbReference>
<dbReference type="GO" id="GO:0005178">
    <property type="term" value="F:integrin binding"/>
    <property type="evidence" value="ECO:0000314"/>
    <property type="project" value="UniProtKB"/>
</dbReference>
<dbReference type="GO" id="GO:0042803">
    <property type="term" value="F:protein homodimerization activity"/>
    <property type="evidence" value="ECO:0000250"/>
    <property type="project" value="UniProtKB"/>
</dbReference>
<dbReference type="GO" id="GO:0007155">
    <property type="term" value="P:cell adhesion"/>
    <property type="evidence" value="ECO:0007669"/>
    <property type="project" value="UniProtKB-KW"/>
</dbReference>
<dbReference type="GO" id="GO:0048251">
    <property type="term" value="P:elastic fiber assembly"/>
    <property type="evidence" value="ECO:0000315"/>
    <property type="project" value="UniProtKB"/>
</dbReference>
<dbReference type="GO" id="GO:0030198">
    <property type="term" value="P:extracellular matrix organization"/>
    <property type="evidence" value="ECO:0000314"/>
    <property type="project" value="MGI"/>
</dbReference>
<dbReference type="GO" id="GO:0098867">
    <property type="term" value="P:intramembranous bone growth"/>
    <property type="evidence" value="ECO:0000315"/>
    <property type="project" value="CACAO"/>
</dbReference>
<dbReference type="GO" id="GO:0016525">
    <property type="term" value="P:negative regulation of angiogenesis"/>
    <property type="evidence" value="ECO:0000315"/>
    <property type="project" value="CACAO"/>
</dbReference>
<dbReference type="GO" id="GO:0000122">
    <property type="term" value="P:negative regulation of transcription by RNA polymerase II"/>
    <property type="evidence" value="ECO:0000315"/>
    <property type="project" value="CACAO"/>
</dbReference>
<dbReference type="GO" id="GO:0033690">
    <property type="term" value="P:positive regulation of osteoblast proliferation"/>
    <property type="evidence" value="ECO:0000315"/>
    <property type="project" value="CACAO"/>
</dbReference>
<dbReference type="GO" id="GO:0045944">
    <property type="term" value="P:positive regulation of transcription by RNA polymerase II"/>
    <property type="evidence" value="ECO:0000315"/>
    <property type="project" value="CACAO"/>
</dbReference>
<dbReference type="GO" id="GO:0034394">
    <property type="term" value="P:protein localization to cell surface"/>
    <property type="evidence" value="ECO:0000315"/>
    <property type="project" value="BHF-UCL"/>
</dbReference>
<dbReference type="GO" id="GO:2000121">
    <property type="term" value="P:regulation of removal of superoxide radicals"/>
    <property type="evidence" value="ECO:0000315"/>
    <property type="project" value="BHF-UCL"/>
</dbReference>
<dbReference type="GO" id="GO:0046903">
    <property type="term" value="P:secretion"/>
    <property type="evidence" value="ECO:0007669"/>
    <property type="project" value="Ensembl"/>
</dbReference>
<dbReference type="CDD" id="cd00054">
    <property type="entry name" value="EGF_CA"/>
    <property type="match status" value="1"/>
</dbReference>
<dbReference type="FunFam" id="2.10.25.10:FF:000091">
    <property type="entry name" value="Fibulin 5"/>
    <property type="match status" value="1"/>
</dbReference>
<dbReference type="FunFam" id="2.10.25.10:FF:000487">
    <property type="entry name" value="Fibulin 5"/>
    <property type="match status" value="1"/>
</dbReference>
<dbReference type="FunFam" id="2.10.25.10:FF:000190">
    <property type="entry name" value="fibulin-5 isoform X2"/>
    <property type="match status" value="1"/>
</dbReference>
<dbReference type="FunFam" id="2.10.25.10:FF:000240">
    <property type="entry name" value="Vitamin K-dependent protein S"/>
    <property type="match status" value="1"/>
</dbReference>
<dbReference type="Gene3D" id="2.10.25.10">
    <property type="entry name" value="Laminin"/>
    <property type="match status" value="6"/>
</dbReference>
<dbReference type="InterPro" id="IPR026823">
    <property type="entry name" value="cEGF"/>
</dbReference>
<dbReference type="InterPro" id="IPR050751">
    <property type="entry name" value="ECM_structural_protein"/>
</dbReference>
<dbReference type="InterPro" id="IPR001881">
    <property type="entry name" value="EGF-like_Ca-bd_dom"/>
</dbReference>
<dbReference type="InterPro" id="IPR000742">
    <property type="entry name" value="EGF-like_dom"/>
</dbReference>
<dbReference type="InterPro" id="IPR000152">
    <property type="entry name" value="EGF-type_Asp/Asn_hydroxyl_site"/>
</dbReference>
<dbReference type="InterPro" id="IPR018097">
    <property type="entry name" value="EGF_Ca-bd_CS"/>
</dbReference>
<dbReference type="InterPro" id="IPR055088">
    <property type="entry name" value="Fibulin_C"/>
</dbReference>
<dbReference type="InterPro" id="IPR009030">
    <property type="entry name" value="Growth_fac_rcpt_cys_sf"/>
</dbReference>
<dbReference type="InterPro" id="IPR049883">
    <property type="entry name" value="NOTCH1_EGF-like"/>
</dbReference>
<dbReference type="PANTHER" id="PTHR24034:SF204">
    <property type="entry name" value="ADHESION G PROTEIN-COUPLED RECEPTOR E1"/>
    <property type="match status" value="1"/>
</dbReference>
<dbReference type="PANTHER" id="PTHR24034">
    <property type="entry name" value="EGF-LIKE DOMAIN-CONTAINING PROTEIN"/>
    <property type="match status" value="1"/>
</dbReference>
<dbReference type="Pfam" id="PF12662">
    <property type="entry name" value="cEGF"/>
    <property type="match status" value="3"/>
</dbReference>
<dbReference type="Pfam" id="PF07645">
    <property type="entry name" value="EGF_CA"/>
    <property type="match status" value="2"/>
</dbReference>
<dbReference type="Pfam" id="PF22914">
    <property type="entry name" value="Fibulin_C"/>
    <property type="match status" value="1"/>
</dbReference>
<dbReference type="SMART" id="SM00181">
    <property type="entry name" value="EGF"/>
    <property type="match status" value="5"/>
</dbReference>
<dbReference type="SMART" id="SM00179">
    <property type="entry name" value="EGF_CA"/>
    <property type="match status" value="6"/>
</dbReference>
<dbReference type="SUPFAM" id="SSF57196">
    <property type="entry name" value="EGF/Laminin"/>
    <property type="match status" value="2"/>
</dbReference>
<dbReference type="SUPFAM" id="SSF57184">
    <property type="entry name" value="Growth factor receptor domain"/>
    <property type="match status" value="1"/>
</dbReference>
<dbReference type="PROSITE" id="PS00010">
    <property type="entry name" value="ASX_HYDROXYL"/>
    <property type="match status" value="4"/>
</dbReference>
<dbReference type="PROSITE" id="PS01186">
    <property type="entry name" value="EGF_2"/>
    <property type="match status" value="4"/>
</dbReference>
<dbReference type="PROSITE" id="PS50026">
    <property type="entry name" value="EGF_3"/>
    <property type="match status" value="5"/>
</dbReference>
<dbReference type="PROSITE" id="PS01187">
    <property type="entry name" value="EGF_CA"/>
    <property type="match status" value="6"/>
</dbReference>
<reference key="1">
    <citation type="journal article" date="1999" name="J. Biol. Chem.">
        <title>DANCE, a novel secreted RGD protein expressed in developing, atherosclerotic, and balloon-injured arteries.</title>
        <authorList>
            <person name="Nakamura T."/>
            <person name="Ruiz-Lozano P."/>
            <person name="Lindner V."/>
            <person name="Yabe D."/>
            <person name="Taniwaki M."/>
            <person name="Furukawa Y."/>
            <person name="Kobuke K."/>
            <person name="Tashiro K."/>
            <person name="Lu Z."/>
            <person name="Andon N.L."/>
            <person name="Schaub R."/>
            <person name="Matsumori A."/>
            <person name="Sasayama S."/>
            <person name="Chien K.R."/>
            <person name="Honjo T."/>
        </authorList>
    </citation>
    <scope>NUCLEOTIDE SEQUENCE [MRNA]</scope>
</reference>
<reference key="2">
    <citation type="journal article" date="2005" name="Science">
        <title>The transcriptional landscape of the mammalian genome.</title>
        <authorList>
            <person name="Carninci P."/>
            <person name="Kasukawa T."/>
            <person name="Katayama S."/>
            <person name="Gough J."/>
            <person name="Frith M.C."/>
            <person name="Maeda N."/>
            <person name="Oyama R."/>
            <person name="Ravasi T."/>
            <person name="Lenhard B."/>
            <person name="Wells C."/>
            <person name="Kodzius R."/>
            <person name="Shimokawa K."/>
            <person name="Bajic V.B."/>
            <person name="Brenner S.E."/>
            <person name="Batalov S."/>
            <person name="Forrest A.R."/>
            <person name="Zavolan M."/>
            <person name="Davis M.J."/>
            <person name="Wilming L.G."/>
            <person name="Aidinis V."/>
            <person name="Allen J.E."/>
            <person name="Ambesi-Impiombato A."/>
            <person name="Apweiler R."/>
            <person name="Aturaliya R.N."/>
            <person name="Bailey T.L."/>
            <person name="Bansal M."/>
            <person name="Baxter L."/>
            <person name="Beisel K.W."/>
            <person name="Bersano T."/>
            <person name="Bono H."/>
            <person name="Chalk A.M."/>
            <person name="Chiu K.P."/>
            <person name="Choudhary V."/>
            <person name="Christoffels A."/>
            <person name="Clutterbuck D.R."/>
            <person name="Crowe M.L."/>
            <person name="Dalla E."/>
            <person name="Dalrymple B.P."/>
            <person name="de Bono B."/>
            <person name="Della Gatta G."/>
            <person name="di Bernardo D."/>
            <person name="Down T."/>
            <person name="Engstrom P."/>
            <person name="Fagiolini M."/>
            <person name="Faulkner G."/>
            <person name="Fletcher C.F."/>
            <person name="Fukushima T."/>
            <person name="Furuno M."/>
            <person name="Futaki S."/>
            <person name="Gariboldi M."/>
            <person name="Georgii-Hemming P."/>
            <person name="Gingeras T.R."/>
            <person name="Gojobori T."/>
            <person name="Green R.E."/>
            <person name="Gustincich S."/>
            <person name="Harbers M."/>
            <person name="Hayashi Y."/>
            <person name="Hensch T.K."/>
            <person name="Hirokawa N."/>
            <person name="Hill D."/>
            <person name="Huminiecki L."/>
            <person name="Iacono M."/>
            <person name="Ikeo K."/>
            <person name="Iwama A."/>
            <person name="Ishikawa T."/>
            <person name="Jakt M."/>
            <person name="Kanapin A."/>
            <person name="Katoh M."/>
            <person name="Kawasawa Y."/>
            <person name="Kelso J."/>
            <person name="Kitamura H."/>
            <person name="Kitano H."/>
            <person name="Kollias G."/>
            <person name="Krishnan S.P."/>
            <person name="Kruger A."/>
            <person name="Kummerfeld S.K."/>
            <person name="Kurochkin I.V."/>
            <person name="Lareau L.F."/>
            <person name="Lazarevic D."/>
            <person name="Lipovich L."/>
            <person name="Liu J."/>
            <person name="Liuni S."/>
            <person name="McWilliam S."/>
            <person name="Madan Babu M."/>
            <person name="Madera M."/>
            <person name="Marchionni L."/>
            <person name="Matsuda H."/>
            <person name="Matsuzawa S."/>
            <person name="Miki H."/>
            <person name="Mignone F."/>
            <person name="Miyake S."/>
            <person name="Morris K."/>
            <person name="Mottagui-Tabar S."/>
            <person name="Mulder N."/>
            <person name="Nakano N."/>
            <person name="Nakauchi H."/>
            <person name="Ng P."/>
            <person name="Nilsson R."/>
            <person name="Nishiguchi S."/>
            <person name="Nishikawa S."/>
            <person name="Nori F."/>
            <person name="Ohara O."/>
            <person name="Okazaki Y."/>
            <person name="Orlando V."/>
            <person name="Pang K.C."/>
            <person name="Pavan W.J."/>
            <person name="Pavesi G."/>
            <person name="Pesole G."/>
            <person name="Petrovsky N."/>
            <person name="Piazza S."/>
            <person name="Reed J."/>
            <person name="Reid J.F."/>
            <person name="Ring B.Z."/>
            <person name="Ringwald M."/>
            <person name="Rost B."/>
            <person name="Ruan Y."/>
            <person name="Salzberg S.L."/>
            <person name="Sandelin A."/>
            <person name="Schneider C."/>
            <person name="Schoenbach C."/>
            <person name="Sekiguchi K."/>
            <person name="Semple C.A."/>
            <person name="Seno S."/>
            <person name="Sessa L."/>
            <person name="Sheng Y."/>
            <person name="Shibata Y."/>
            <person name="Shimada H."/>
            <person name="Shimada K."/>
            <person name="Silva D."/>
            <person name="Sinclair B."/>
            <person name="Sperling S."/>
            <person name="Stupka E."/>
            <person name="Sugiura K."/>
            <person name="Sultana R."/>
            <person name="Takenaka Y."/>
            <person name="Taki K."/>
            <person name="Tammoja K."/>
            <person name="Tan S.L."/>
            <person name="Tang S."/>
            <person name="Taylor M.S."/>
            <person name="Tegner J."/>
            <person name="Teichmann S.A."/>
            <person name="Ueda H.R."/>
            <person name="van Nimwegen E."/>
            <person name="Verardo R."/>
            <person name="Wei C.L."/>
            <person name="Yagi K."/>
            <person name="Yamanishi H."/>
            <person name="Zabarovsky E."/>
            <person name="Zhu S."/>
            <person name="Zimmer A."/>
            <person name="Hide W."/>
            <person name="Bult C."/>
            <person name="Grimmond S.M."/>
            <person name="Teasdale R.D."/>
            <person name="Liu E.T."/>
            <person name="Brusic V."/>
            <person name="Quackenbush J."/>
            <person name="Wahlestedt C."/>
            <person name="Mattick J.S."/>
            <person name="Hume D.A."/>
            <person name="Kai C."/>
            <person name="Sasaki D."/>
            <person name="Tomaru Y."/>
            <person name="Fukuda S."/>
            <person name="Kanamori-Katayama M."/>
            <person name="Suzuki M."/>
            <person name="Aoki J."/>
            <person name="Arakawa T."/>
            <person name="Iida J."/>
            <person name="Imamura K."/>
            <person name="Itoh M."/>
            <person name="Kato T."/>
            <person name="Kawaji H."/>
            <person name="Kawagashira N."/>
            <person name="Kawashima T."/>
            <person name="Kojima M."/>
            <person name="Kondo S."/>
            <person name="Konno H."/>
            <person name="Nakano K."/>
            <person name="Ninomiya N."/>
            <person name="Nishio T."/>
            <person name="Okada M."/>
            <person name="Plessy C."/>
            <person name="Shibata K."/>
            <person name="Shiraki T."/>
            <person name="Suzuki S."/>
            <person name="Tagami M."/>
            <person name="Waki K."/>
            <person name="Watahiki A."/>
            <person name="Okamura-Oho Y."/>
            <person name="Suzuki H."/>
            <person name="Kawai J."/>
            <person name="Hayashizaki Y."/>
        </authorList>
    </citation>
    <scope>NUCLEOTIDE SEQUENCE [LARGE SCALE MRNA]</scope>
    <source>
        <strain>C57BL/6J</strain>
        <tissue>Eye</tissue>
        <tissue>Lung</tissue>
    </source>
</reference>
<reference key="3">
    <citation type="journal article" date="2004" name="Genome Res.">
        <title>The status, quality, and expansion of the NIH full-length cDNA project: the Mammalian Gene Collection (MGC).</title>
        <authorList>
            <consortium name="The MGC Project Team"/>
        </authorList>
    </citation>
    <scope>NUCLEOTIDE SEQUENCE [LARGE SCALE MRNA]</scope>
    <source>
        <strain>C57BL/6J</strain>
        <tissue>Mammary gland</tissue>
    </source>
</reference>
<reference key="4">
    <citation type="journal article" date="2002" name="Nature">
        <title>Fibulin-5/DANCE is essential for elastogenesis in vivo.</title>
        <authorList>
            <person name="Nakamura T."/>
            <person name="Lozano P.R."/>
            <person name="Ikeda Y."/>
            <person name="Iwanaga Y."/>
            <person name="Hinek A."/>
            <person name="Minamisawa S."/>
            <person name="Cheng C.F."/>
            <person name="Kobuke K."/>
            <person name="Dalton N."/>
            <person name="Takada Y."/>
            <person name="Tashiro K."/>
            <person name="Ross J."/>
            <person name="Honjo T."/>
            <person name="Chien K.R."/>
        </authorList>
    </citation>
    <scope>FUNCTION</scope>
    <scope>DISRUPTION PHENOTYPE</scope>
    <scope>INTERACTION WITH ITGAV/ITGB3; ITGAV/ITGB5 AND ITGA9/ITGB1</scope>
</reference>
<reference key="5">
    <citation type="journal article" date="2010" name="Cell">
        <title>A tissue-specific atlas of mouse protein phosphorylation and expression.</title>
        <authorList>
            <person name="Huttlin E.L."/>
            <person name="Jedrychowski M.P."/>
            <person name="Elias J.E."/>
            <person name="Goswami T."/>
            <person name="Rad R."/>
            <person name="Beausoleil S.A."/>
            <person name="Villen J."/>
            <person name="Haas W."/>
            <person name="Sowa M.E."/>
            <person name="Gygi S.P."/>
        </authorList>
    </citation>
    <scope>IDENTIFICATION BY MASS SPECTROMETRY [LARGE SCALE ANALYSIS]</scope>
    <source>
        <tissue>Brown adipose tissue</tissue>
        <tissue>Heart</tissue>
        <tissue>Lung</tissue>
        <tissue>Spleen</tissue>
        <tissue>Testis</tissue>
    </source>
</reference>
<reference key="6">
    <citation type="journal article" date="2004" name="Nat. Genet.">
        <title>Elastic fiber homeostasis requires lysyl oxidase-like 1 protein.</title>
        <authorList>
            <person name="Liu X."/>
            <person name="Zhao Y."/>
            <person name="Gao J."/>
            <person name="Pawlyk B."/>
            <person name="Starcher B."/>
            <person name="Spencer J.A."/>
            <person name="Yanagisawa H."/>
            <person name="Zuo J."/>
            <person name="Li T."/>
        </authorList>
    </citation>
    <scope>INTERACTION WITH LOXL1</scope>
    <scope>SUBCELLULAR LOCATION</scope>
</reference>
<evidence type="ECO:0000250" key="1">
    <source>
        <dbReference type="UniProtKB" id="Q9UBX5"/>
    </source>
</evidence>
<evidence type="ECO:0000255" key="2"/>
<evidence type="ECO:0000255" key="3">
    <source>
        <dbReference type="PROSITE-ProRule" id="PRU00076"/>
    </source>
</evidence>
<evidence type="ECO:0000269" key="4">
    <source>
    </source>
</evidence>
<evidence type="ECO:0000269" key="5">
    <source>
    </source>
</evidence>
<evidence type="ECO:0000305" key="6"/>
<name>FBLN5_MOUSE</name>
<accession>Q9WVH9</accession>
<accession>Q541Z7</accession>
<feature type="signal peptide" evidence="2">
    <location>
        <begin position="1"/>
        <end position="23"/>
    </location>
</feature>
<feature type="chain" id="PRO_0000007578" description="Fibulin-5">
    <location>
        <begin position="24"/>
        <end position="448"/>
    </location>
</feature>
<feature type="domain" description="EGF-like 1; calcium-binding" evidence="3">
    <location>
        <begin position="42"/>
        <end position="82"/>
    </location>
</feature>
<feature type="domain" description="EGF-like 2; calcium-binding" evidence="3">
    <location>
        <begin position="127"/>
        <end position="167"/>
    </location>
</feature>
<feature type="domain" description="EGF-like 3; calcium-binding" evidence="3">
    <location>
        <begin position="168"/>
        <end position="206"/>
    </location>
</feature>
<feature type="domain" description="EGF-like 4; calcium-binding" evidence="3">
    <location>
        <begin position="207"/>
        <end position="246"/>
    </location>
</feature>
<feature type="domain" description="EGF-like 5; calcium-binding" evidence="3">
    <location>
        <begin position="247"/>
        <end position="287"/>
    </location>
</feature>
<feature type="domain" description="EGF-like 6; calcium-binding" evidence="3">
    <location>
        <begin position="288"/>
        <end position="333"/>
    </location>
</feature>
<feature type="region of interest" description="Interaction with LOXL1" evidence="5">
    <location>
        <begin position="245"/>
        <end position="448"/>
    </location>
</feature>
<feature type="short sequence motif" description="Cell attachment site" evidence="2">
    <location>
        <begin position="54"/>
        <end position="56"/>
    </location>
</feature>
<feature type="glycosylation site" description="N-linked (GlcNAc...) asparagine" evidence="2">
    <location>
        <position position="283"/>
    </location>
</feature>
<feature type="glycosylation site" description="N-linked (GlcNAc...) asparagine" evidence="2">
    <location>
        <position position="296"/>
    </location>
</feature>
<feature type="disulfide bond" evidence="3">
    <location>
        <begin position="46"/>
        <end position="59"/>
    </location>
</feature>
<feature type="disulfide bond" evidence="3">
    <location>
        <begin position="53"/>
        <end position="68"/>
    </location>
</feature>
<feature type="disulfide bond" evidence="3">
    <location>
        <begin position="131"/>
        <end position="144"/>
    </location>
</feature>
<feature type="disulfide bond" evidence="3">
    <location>
        <begin position="138"/>
        <end position="153"/>
    </location>
</feature>
<feature type="disulfide bond" evidence="3">
    <location>
        <begin position="155"/>
        <end position="166"/>
    </location>
</feature>
<feature type="disulfide bond" evidence="3">
    <location>
        <begin position="172"/>
        <end position="181"/>
    </location>
</feature>
<feature type="disulfide bond" evidence="3">
    <location>
        <begin position="177"/>
        <end position="190"/>
    </location>
</feature>
<feature type="disulfide bond" evidence="3">
    <location>
        <begin position="192"/>
        <end position="205"/>
    </location>
</feature>
<feature type="disulfide bond" evidence="3">
    <location>
        <begin position="211"/>
        <end position="221"/>
    </location>
</feature>
<feature type="disulfide bond" evidence="3">
    <location>
        <begin position="217"/>
        <end position="230"/>
    </location>
</feature>
<feature type="disulfide bond" evidence="3">
    <location>
        <begin position="232"/>
        <end position="245"/>
    </location>
</feature>
<feature type="disulfide bond" evidence="3">
    <location>
        <begin position="251"/>
        <end position="262"/>
    </location>
</feature>
<feature type="disulfide bond" evidence="3">
    <location>
        <begin position="258"/>
        <end position="271"/>
    </location>
</feature>
<feature type="disulfide bond" evidence="3">
    <location>
        <begin position="273"/>
        <end position="286"/>
    </location>
</feature>
<feature type="disulfide bond" evidence="3">
    <location>
        <begin position="292"/>
        <end position="305"/>
    </location>
</feature>
<feature type="disulfide bond" evidence="3">
    <location>
        <begin position="299"/>
        <end position="314"/>
    </location>
</feature>
<feature type="disulfide bond" evidence="3">
    <location>
        <begin position="320"/>
        <end position="332"/>
    </location>
</feature>
<gene>
    <name type="primary">Fbln5</name>
    <name type="synonym">Dance</name>
</gene>
<keyword id="KW-0106">Calcium</keyword>
<keyword id="KW-0130">Cell adhesion</keyword>
<keyword id="KW-1015">Disulfide bond</keyword>
<keyword id="KW-0245">EGF-like domain</keyword>
<keyword id="KW-0272">Extracellular matrix</keyword>
<keyword id="KW-0325">Glycoprotein</keyword>
<keyword id="KW-1185">Reference proteome</keyword>
<keyword id="KW-0677">Repeat</keyword>
<keyword id="KW-0964">Secreted</keyword>
<keyword id="KW-0732">Signal</keyword>
<comment type="function">
    <text evidence="1 4">Essential for elastic fiber formation, is involved in the assembly of continuous elastin (ELN) polymer and promotes the interaction of microfibrils and ELN (By similarity). Stabilizes and organizes elastic fibers in the skin, lung and vasculature. Promotes adhesion of endothelial cells through interaction of integrins and the RGD motif. Vascular ligand for integrin receptors which may play a role in vascular development and remodeling (PubMed:11805835). May act as an adapter that mediates the interaction between FBN1 and ELN (By similarity).</text>
</comment>
<comment type="subunit">
    <text evidence="1 4 5">Homodimer. Monomer, homodimerizes in presence of Ca(2+). Interacts with ELN (By similarity). Interacts (via N-terminus) with the integrins ITGAV/ITGB3, ITGAV/ITGB5 and ITGA9/ITGB1 (PubMed:11805835). Interacts with FBN1 (via N-terminal domain). Forms a ternary complex with ELN and FBN1 (By similarity). Interacts with EFEMP2 with moderate affinity (By similarity). Interacts with LOXL1 (PubMed:14745449).</text>
</comment>
<comment type="subcellular location">
    <subcellularLocation>
        <location evidence="1">Secreted</location>
    </subcellularLocation>
    <subcellularLocation>
        <location evidence="5">Secreted</location>
        <location evidence="5">Extracellular space</location>
        <location evidence="5">Extracellular matrix</location>
    </subcellularLocation>
    <text evidence="1">co-localizes with ELN in elastic fibers.</text>
</comment>
<comment type="PTM">
    <text evidence="1">N-glycosylated.</text>
</comment>
<comment type="disruption phenotype">
    <text evidence="4">Mice survive to adulthood, but have a tortuous aorta with loss of compliance, severe emphisema and loose skin. They exhibit a severely disorganized elastic fiber system throughout the body.</text>
</comment>
<comment type="similarity">
    <text evidence="6">Belongs to the fibulin family.</text>
</comment>
<sequence length="448" mass="50193">MPGLKRILTVTILALWLPHPGNAQQQCTNGFDLDRQSGQCLDIDECRTIPEACRGDMMCVNQNGGYLCIPRTNPVYRGPYSNPYSTSYSGPYPAAAPPVPASNYPTISRPLVCRFGYQMDEGNQCVDVDECATDSHQCNPTQICINTEGGYTCSCTDGYWLLEGQCLDIDECRYGYCQQLCANVPGSYSCTCNPGFTLNDDGRSCQDVNECETENPCVQTCVNTYGSFICRCDPGYELEEDGIHCSDMDECSFSEFLCQHECVNQPGSYFCSCPPGYVLLDDNRSCQDINECEHRNHTCTSLQTCYNLQGGFKCIDPISCEEPYLLIGENRCMCPAEHTSCRDQPFTILYRDMDVVSGRSVPADIFQMQATTRYPGAYYIFQIKSGNEGREFYMRQTGPISATLVMTRPIKGPRDIQLDLEMITVNTVINFRGSSVIRLRIYVSQYPF</sequence>
<proteinExistence type="evidence at protein level"/>
<organism>
    <name type="scientific">Mus musculus</name>
    <name type="common">Mouse</name>
    <dbReference type="NCBI Taxonomy" id="10090"/>
    <lineage>
        <taxon>Eukaryota</taxon>
        <taxon>Metazoa</taxon>
        <taxon>Chordata</taxon>
        <taxon>Craniata</taxon>
        <taxon>Vertebrata</taxon>
        <taxon>Euteleostomi</taxon>
        <taxon>Mammalia</taxon>
        <taxon>Eutheria</taxon>
        <taxon>Euarchontoglires</taxon>
        <taxon>Glires</taxon>
        <taxon>Rodentia</taxon>
        <taxon>Myomorpha</taxon>
        <taxon>Muroidea</taxon>
        <taxon>Muridae</taxon>
        <taxon>Murinae</taxon>
        <taxon>Mus</taxon>
        <taxon>Mus</taxon>
    </lineage>
</organism>
<protein>
    <recommendedName>
        <fullName>Fibulin-5</fullName>
        <shortName>FIBL-5</shortName>
    </recommendedName>
    <alternativeName>
        <fullName>Developmental arteries and neural crest EGF-like protein</fullName>
        <shortName>Dance</shortName>
    </alternativeName>
</protein>